<evidence type="ECO:0000250" key="1"/>
<evidence type="ECO:0000250" key="2">
    <source>
        <dbReference type="UniProtKB" id="P00157"/>
    </source>
</evidence>
<evidence type="ECO:0000255" key="3">
    <source>
        <dbReference type="PROSITE-ProRule" id="PRU00967"/>
    </source>
</evidence>
<evidence type="ECO:0000255" key="4">
    <source>
        <dbReference type="PROSITE-ProRule" id="PRU00968"/>
    </source>
</evidence>
<keyword id="KW-0249">Electron transport</keyword>
<keyword id="KW-0349">Heme</keyword>
<keyword id="KW-0408">Iron</keyword>
<keyword id="KW-0472">Membrane</keyword>
<keyword id="KW-0479">Metal-binding</keyword>
<keyword id="KW-0496">Mitochondrion</keyword>
<keyword id="KW-0999">Mitochondrion inner membrane</keyword>
<keyword id="KW-1185">Reference proteome</keyword>
<keyword id="KW-0679">Respiratory chain</keyword>
<keyword id="KW-0812">Transmembrane</keyword>
<keyword id="KW-1133">Transmembrane helix</keyword>
<keyword id="KW-0813">Transport</keyword>
<keyword id="KW-0830">Ubiquinone</keyword>
<gene>
    <name type="primary">MT-CYB</name>
    <name type="synonym">COB</name>
    <name type="synonym">CYTB</name>
    <name type="synonym">MTCYB</name>
</gene>
<protein>
    <recommendedName>
        <fullName>Cytochrome b</fullName>
    </recommendedName>
    <alternativeName>
        <fullName>Complex III subunit 3</fullName>
    </alternativeName>
    <alternativeName>
        <fullName>Complex III subunit III</fullName>
    </alternativeName>
    <alternativeName>
        <fullName>Cytochrome b-c1 complex subunit 3</fullName>
    </alternativeName>
    <alternativeName>
        <fullName>Ubiquinol-cytochrome-c reductase complex cytochrome b subunit</fullName>
    </alternativeName>
</protein>
<dbReference type="EMBL" id="AJ489746">
    <property type="protein sequence ID" value="CAD33972.1"/>
    <property type="molecule type" value="Genomic_DNA"/>
</dbReference>
<dbReference type="SMR" id="Q6KF53"/>
<dbReference type="Proteomes" id="UP000233020">
    <property type="component" value="Whole Genome Shotgun Assembly"/>
</dbReference>
<dbReference type="GO" id="GO:0005743">
    <property type="term" value="C:mitochondrial inner membrane"/>
    <property type="evidence" value="ECO:0007669"/>
    <property type="project" value="UniProtKB-SubCell"/>
</dbReference>
<dbReference type="GO" id="GO:0045275">
    <property type="term" value="C:respiratory chain complex III"/>
    <property type="evidence" value="ECO:0007669"/>
    <property type="project" value="InterPro"/>
</dbReference>
<dbReference type="GO" id="GO:0046872">
    <property type="term" value="F:metal ion binding"/>
    <property type="evidence" value="ECO:0007669"/>
    <property type="project" value="UniProtKB-KW"/>
</dbReference>
<dbReference type="GO" id="GO:0008121">
    <property type="term" value="F:ubiquinol-cytochrome-c reductase activity"/>
    <property type="evidence" value="ECO:0007669"/>
    <property type="project" value="InterPro"/>
</dbReference>
<dbReference type="GO" id="GO:0006122">
    <property type="term" value="P:mitochondrial electron transport, ubiquinol to cytochrome c"/>
    <property type="evidence" value="ECO:0007669"/>
    <property type="project" value="TreeGrafter"/>
</dbReference>
<dbReference type="CDD" id="cd00290">
    <property type="entry name" value="cytochrome_b_C"/>
    <property type="match status" value="1"/>
</dbReference>
<dbReference type="CDD" id="cd00284">
    <property type="entry name" value="Cytochrome_b_N"/>
    <property type="match status" value="1"/>
</dbReference>
<dbReference type="FunFam" id="1.20.810.10:FF:000002">
    <property type="entry name" value="Cytochrome b"/>
    <property type="match status" value="1"/>
</dbReference>
<dbReference type="Gene3D" id="1.20.810.10">
    <property type="entry name" value="Cytochrome Bc1 Complex, Chain C"/>
    <property type="match status" value="1"/>
</dbReference>
<dbReference type="InterPro" id="IPR005798">
    <property type="entry name" value="Cyt_b/b6_C"/>
</dbReference>
<dbReference type="InterPro" id="IPR036150">
    <property type="entry name" value="Cyt_b/b6_C_sf"/>
</dbReference>
<dbReference type="InterPro" id="IPR005797">
    <property type="entry name" value="Cyt_b/b6_N"/>
</dbReference>
<dbReference type="InterPro" id="IPR027387">
    <property type="entry name" value="Cytb/b6-like_sf"/>
</dbReference>
<dbReference type="InterPro" id="IPR030689">
    <property type="entry name" value="Cytochrome_b"/>
</dbReference>
<dbReference type="InterPro" id="IPR048260">
    <property type="entry name" value="Cytochrome_b_C_euk/bac"/>
</dbReference>
<dbReference type="InterPro" id="IPR048259">
    <property type="entry name" value="Cytochrome_b_N_euk/bac"/>
</dbReference>
<dbReference type="InterPro" id="IPR016174">
    <property type="entry name" value="Di-haem_cyt_TM"/>
</dbReference>
<dbReference type="PANTHER" id="PTHR19271">
    <property type="entry name" value="CYTOCHROME B"/>
    <property type="match status" value="1"/>
</dbReference>
<dbReference type="PANTHER" id="PTHR19271:SF16">
    <property type="entry name" value="CYTOCHROME B"/>
    <property type="match status" value="1"/>
</dbReference>
<dbReference type="Pfam" id="PF00032">
    <property type="entry name" value="Cytochrom_B_C"/>
    <property type="match status" value="1"/>
</dbReference>
<dbReference type="Pfam" id="PF00033">
    <property type="entry name" value="Cytochrome_B"/>
    <property type="match status" value="1"/>
</dbReference>
<dbReference type="PIRSF" id="PIRSF038885">
    <property type="entry name" value="COB"/>
    <property type="match status" value="1"/>
</dbReference>
<dbReference type="SUPFAM" id="SSF81648">
    <property type="entry name" value="a domain/subunit of cytochrome bc1 complex (Ubiquinol-cytochrome c reductase)"/>
    <property type="match status" value="1"/>
</dbReference>
<dbReference type="SUPFAM" id="SSF81342">
    <property type="entry name" value="Transmembrane di-heme cytochromes"/>
    <property type="match status" value="1"/>
</dbReference>
<dbReference type="PROSITE" id="PS51003">
    <property type="entry name" value="CYTB_CTER"/>
    <property type="match status" value="1"/>
</dbReference>
<dbReference type="PROSITE" id="PS51002">
    <property type="entry name" value="CYTB_NTER"/>
    <property type="match status" value="1"/>
</dbReference>
<comment type="function">
    <text evidence="2">Component of the ubiquinol-cytochrome c reductase complex (complex III or cytochrome b-c1 complex) that is part of the mitochondrial respiratory chain. The b-c1 complex mediates electron transfer from ubiquinol to cytochrome c. Contributes to the generation of a proton gradient across the mitochondrial membrane that is then used for ATP synthesis.</text>
</comment>
<comment type="cofactor">
    <cofactor evidence="2">
        <name>heme b</name>
        <dbReference type="ChEBI" id="CHEBI:60344"/>
    </cofactor>
    <text evidence="2">Binds 2 heme b groups non-covalently.</text>
</comment>
<comment type="subunit">
    <text evidence="2">The cytochrome bc1 complex contains 11 subunits: 3 respiratory subunits (MT-CYB, CYC1 and UQCRFS1), 2 core proteins (UQCRC1 and UQCRC2) and 6 low-molecular weight proteins (UQCRH/QCR6, UQCRB/QCR7, UQCRQ/QCR8, UQCR10/QCR9, UQCR11/QCR10 and a cleavage product of UQCRFS1). This cytochrome bc1 complex then forms a dimer.</text>
</comment>
<comment type="subcellular location">
    <subcellularLocation>
        <location evidence="2">Mitochondrion inner membrane</location>
        <topology evidence="2">Multi-pass membrane protein</topology>
    </subcellularLocation>
</comment>
<comment type="miscellaneous">
    <text evidence="1">Heme 1 (or BL or b562) is low-potential and absorbs at about 562 nm, and heme 2 (or BH or b566) is high-potential and absorbs at about 566 nm.</text>
</comment>
<comment type="similarity">
    <text evidence="3 4">Belongs to the cytochrome b family.</text>
</comment>
<comment type="caution">
    <text evidence="2">The full-length protein contains only eight transmembrane helices, not nine as predicted by bioinformatics tools.</text>
</comment>
<geneLocation type="mitochondrion"/>
<organism>
    <name type="scientific">Aotus nancymaae</name>
    <name type="common">Ma's night monkey</name>
    <dbReference type="NCBI Taxonomy" id="37293"/>
    <lineage>
        <taxon>Eukaryota</taxon>
        <taxon>Metazoa</taxon>
        <taxon>Chordata</taxon>
        <taxon>Craniata</taxon>
        <taxon>Vertebrata</taxon>
        <taxon>Euteleostomi</taxon>
        <taxon>Mammalia</taxon>
        <taxon>Eutheria</taxon>
        <taxon>Euarchontoglires</taxon>
        <taxon>Primates</taxon>
        <taxon>Haplorrhini</taxon>
        <taxon>Platyrrhini</taxon>
        <taxon>Aotidae</taxon>
        <taxon>Aotus</taxon>
    </lineage>
</organism>
<proteinExistence type="inferred from homology"/>
<feature type="chain" id="PRO_0000254779" description="Cytochrome b">
    <location>
        <begin position="1"/>
        <end position="379"/>
    </location>
</feature>
<feature type="transmembrane region" description="Helical" evidence="2">
    <location>
        <begin position="33"/>
        <end position="53"/>
    </location>
</feature>
<feature type="transmembrane region" description="Helical" evidence="2">
    <location>
        <begin position="77"/>
        <end position="98"/>
    </location>
</feature>
<feature type="transmembrane region" description="Helical" evidence="2">
    <location>
        <begin position="113"/>
        <end position="133"/>
    </location>
</feature>
<feature type="transmembrane region" description="Helical" evidence="2">
    <location>
        <begin position="178"/>
        <end position="198"/>
    </location>
</feature>
<feature type="transmembrane region" description="Helical" evidence="2">
    <location>
        <begin position="226"/>
        <end position="246"/>
    </location>
</feature>
<feature type="transmembrane region" description="Helical" evidence="2">
    <location>
        <begin position="288"/>
        <end position="308"/>
    </location>
</feature>
<feature type="transmembrane region" description="Helical" evidence="2">
    <location>
        <begin position="320"/>
        <end position="340"/>
    </location>
</feature>
<feature type="transmembrane region" description="Helical" evidence="2">
    <location>
        <begin position="347"/>
        <end position="367"/>
    </location>
</feature>
<feature type="binding site" description="axial binding residue" evidence="2">
    <location>
        <position position="83"/>
    </location>
    <ligand>
        <name>heme b</name>
        <dbReference type="ChEBI" id="CHEBI:60344"/>
        <label>b562</label>
    </ligand>
    <ligandPart>
        <name>Fe</name>
        <dbReference type="ChEBI" id="CHEBI:18248"/>
    </ligandPart>
</feature>
<feature type="binding site" description="axial binding residue" evidence="2">
    <location>
        <position position="97"/>
    </location>
    <ligand>
        <name>heme b</name>
        <dbReference type="ChEBI" id="CHEBI:60344"/>
        <label>b566</label>
    </ligand>
    <ligandPart>
        <name>Fe</name>
        <dbReference type="ChEBI" id="CHEBI:18248"/>
    </ligandPart>
</feature>
<feature type="binding site" description="axial binding residue" evidence="2">
    <location>
        <position position="182"/>
    </location>
    <ligand>
        <name>heme b</name>
        <dbReference type="ChEBI" id="CHEBI:60344"/>
        <label>b562</label>
    </ligand>
    <ligandPart>
        <name>Fe</name>
        <dbReference type="ChEBI" id="CHEBI:18248"/>
    </ligandPart>
</feature>
<feature type="binding site" description="axial binding residue" evidence="2">
    <location>
        <position position="196"/>
    </location>
    <ligand>
        <name>heme b</name>
        <dbReference type="ChEBI" id="CHEBI:60344"/>
        <label>b566</label>
    </ligand>
    <ligandPart>
        <name>Fe</name>
        <dbReference type="ChEBI" id="CHEBI:18248"/>
    </ligandPart>
</feature>
<feature type="binding site" evidence="2">
    <location>
        <position position="201"/>
    </location>
    <ligand>
        <name>a ubiquinone</name>
        <dbReference type="ChEBI" id="CHEBI:16389"/>
    </ligand>
</feature>
<sequence>MTSPRKTHPLTKIINESFIDLPTPPNISSWWNFGSLLGICLIIQITTGLFLAMHYTPDTSTAFSSVAHITRDVNYGWMIRYMHANGASMFFVCLFLHIGRGLYYGSFLSLKTWNIGTILLLTTMATAFMGYVLPWGQMSFWGATVITNLMSAIPYIGSDLVQWIWGGFSVDKATLTRFFTFHFILPFIIAALATIHLLFLHETGSSNPSGMTSDPDKITFHPYYTAKDILGLIFLLLSLMSLTLFMPDLLTDPDNYTLANPLNTPPHIKPEWYFLFAYAILRSIPNKLGGVLALVLSILILMVIPMLHLSKQQSMMFRPITQILFWTLVADLLTLTWIGGQPVEYPFVTIGQTASITYFFIIIILMPLSASIENMLLKW</sequence>
<reference key="1">
    <citation type="submission" date="2002-06" db="EMBL/GenBank/DDBJ databases">
        <title>Genetic analysis of the squirrel monkey (genus Saimiri) breeding colony of the Pasteur Institute (French Guiana).</title>
        <authorList>
            <person name="Lavergne A."/>
        </authorList>
    </citation>
    <scope>NUCLEOTIDE SEQUENCE [GENOMIC DNA]</scope>
    <source>
        <strain>Isolate M26</strain>
        <tissue>Ear</tissue>
    </source>
</reference>
<name>CYB_AOTNA</name>
<accession>Q6KF53</accession>